<proteinExistence type="inferred from homology"/>
<name>TI142_ARATH</name>
<protein>
    <recommendedName>
        <fullName>Mitochondrial import inner membrane translocase subunit TIM14-2</fullName>
    </recommendedName>
    <alternativeName>
        <fullName>Chaperone DnaJ-domain containing protein 2</fullName>
    </alternativeName>
</protein>
<comment type="function">
    <text evidence="1">Component of the PAM complex, a complex required for the translocation of transit peptide-containing proteins from the inner membrane into the mitochondrial matrix in an ATP-dependent manner.</text>
</comment>
<comment type="subunit">
    <text evidence="1">Probable component of the PAM complex at least composed of a mitochondrial HSP70 protein, TIMM44 and TIMM14. The complex interacts with the TIMM23 component of the TIM17:23 complex (By similarity).</text>
</comment>
<comment type="subcellular location">
    <subcellularLocation>
        <location evidence="3">Mitochondrion</location>
    </subcellularLocation>
    <subcellularLocation>
        <location evidence="1">Mitochondrion inner membrane</location>
        <topology evidence="4">Single-pass membrane protein</topology>
    </subcellularLocation>
</comment>
<comment type="similarity">
    <text evidence="4">Belongs to the TIM14 family.</text>
</comment>
<keyword id="KW-0472">Membrane</keyword>
<keyword id="KW-0496">Mitochondrion</keyword>
<keyword id="KW-0999">Mitochondrion inner membrane</keyword>
<keyword id="KW-1185">Reference proteome</keyword>
<keyword id="KW-0812">Transmembrane</keyword>
<keyword id="KW-1133">Transmembrane helix</keyword>
<gene>
    <name type="primary">TIM14-2</name>
    <name type="ordered locus">At3g09700</name>
    <name type="ORF">F11F8.29</name>
</gene>
<evidence type="ECO:0000250" key="1"/>
<evidence type="ECO:0000255" key="2"/>
<evidence type="ECO:0000269" key="3">
    <source>
    </source>
</evidence>
<evidence type="ECO:0000305" key="4"/>
<organism>
    <name type="scientific">Arabidopsis thaliana</name>
    <name type="common">Mouse-ear cress</name>
    <dbReference type="NCBI Taxonomy" id="3702"/>
    <lineage>
        <taxon>Eukaryota</taxon>
        <taxon>Viridiplantae</taxon>
        <taxon>Streptophyta</taxon>
        <taxon>Embryophyta</taxon>
        <taxon>Tracheophyta</taxon>
        <taxon>Spermatophyta</taxon>
        <taxon>Magnoliopsida</taxon>
        <taxon>eudicotyledons</taxon>
        <taxon>Gunneridae</taxon>
        <taxon>Pentapetalae</taxon>
        <taxon>rosids</taxon>
        <taxon>malvids</taxon>
        <taxon>Brassicales</taxon>
        <taxon>Brassicaceae</taxon>
        <taxon>Camelineae</taxon>
        <taxon>Arabidopsis</taxon>
    </lineage>
</organism>
<feature type="chain" id="PRO_0000420926" description="Mitochondrial import inner membrane translocase subunit TIM14-2">
    <location>
        <begin position="1"/>
        <end position="112"/>
    </location>
</feature>
<feature type="transmembrane region" description="Helical" evidence="2">
    <location>
        <begin position="7"/>
        <end position="25"/>
    </location>
</feature>
<feature type="domain" description="J">
    <location>
        <begin position="53"/>
        <end position="112"/>
    </location>
</feature>
<sequence length="112" mass="12109">MVAAIIAGAAVAAAAYAGKYGIEAWQAFKLRPVRPRMRKFYEGGFQATMNRREAALILGVRESVAAEKVKEAHRRVMVANHPDAGGSHYLASKINEAKDMMLGKTKNSGSAF</sequence>
<accession>Q9SF33</accession>
<reference key="1">
    <citation type="journal article" date="2000" name="Nature">
        <title>Sequence and analysis of chromosome 3 of the plant Arabidopsis thaliana.</title>
        <authorList>
            <person name="Salanoubat M."/>
            <person name="Lemcke K."/>
            <person name="Rieger M."/>
            <person name="Ansorge W."/>
            <person name="Unseld M."/>
            <person name="Fartmann B."/>
            <person name="Valle G."/>
            <person name="Bloecker H."/>
            <person name="Perez-Alonso M."/>
            <person name="Obermaier B."/>
            <person name="Delseny M."/>
            <person name="Boutry M."/>
            <person name="Grivell L.A."/>
            <person name="Mache R."/>
            <person name="Puigdomenech P."/>
            <person name="De Simone V."/>
            <person name="Choisne N."/>
            <person name="Artiguenave F."/>
            <person name="Robert C."/>
            <person name="Brottier P."/>
            <person name="Wincker P."/>
            <person name="Cattolico L."/>
            <person name="Weissenbach J."/>
            <person name="Saurin W."/>
            <person name="Quetier F."/>
            <person name="Schaefer M."/>
            <person name="Mueller-Auer S."/>
            <person name="Gabel C."/>
            <person name="Fuchs M."/>
            <person name="Benes V."/>
            <person name="Wurmbach E."/>
            <person name="Drzonek H."/>
            <person name="Erfle H."/>
            <person name="Jordan N."/>
            <person name="Bangert S."/>
            <person name="Wiedelmann R."/>
            <person name="Kranz H."/>
            <person name="Voss H."/>
            <person name="Holland R."/>
            <person name="Brandt P."/>
            <person name="Nyakatura G."/>
            <person name="Vezzi A."/>
            <person name="D'Angelo M."/>
            <person name="Pallavicini A."/>
            <person name="Toppo S."/>
            <person name="Simionati B."/>
            <person name="Conrad A."/>
            <person name="Hornischer K."/>
            <person name="Kauer G."/>
            <person name="Loehnert T.-H."/>
            <person name="Nordsiek G."/>
            <person name="Reichelt J."/>
            <person name="Scharfe M."/>
            <person name="Schoen O."/>
            <person name="Bargues M."/>
            <person name="Terol J."/>
            <person name="Climent J."/>
            <person name="Navarro P."/>
            <person name="Collado C."/>
            <person name="Perez-Perez A."/>
            <person name="Ottenwaelder B."/>
            <person name="Duchemin D."/>
            <person name="Cooke R."/>
            <person name="Laudie M."/>
            <person name="Berger-Llauro C."/>
            <person name="Purnelle B."/>
            <person name="Masuy D."/>
            <person name="de Haan M."/>
            <person name="Maarse A.C."/>
            <person name="Alcaraz J.-P."/>
            <person name="Cottet A."/>
            <person name="Casacuberta E."/>
            <person name="Monfort A."/>
            <person name="Argiriou A."/>
            <person name="Flores M."/>
            <person name="Liguori R."/>
            <person name="Vitale D."/>
            <person name="Mannhaupt G."/>
            <person name="Haase D."/>
            <person name="Schoof H."/>
            <person name="Rudd S."/>
            <person name="Zaccaria P."/>
            <person name="Mewes H.-W."/>
            <person name="Mayer K.F.X."/>
            <person name="Kaul S."/>
            <person name="Town C.D."/>
            <person name="Koo H.L."/>
            <person name="Tallon L.J."/>
            <person name="Jenkins J."/>
            <person name="Rooney T."/>
            <person name="Rizzo M."/>
            <person name="Walts A."/>
            <person name="Utterback T."/>
            <person name="Fujii C.Y."/>
            <person name="Shea T.P."/>
            <person name="Creasy T.H."/>
            <person name="Haas B."/>
            <person name="Maiti R."/>
            <person name="Wu D."/>
            <person name="Peterson J."/>
            <person name="Van Aken S."/>
            <person name="Pai G."/>
            <person name="Militscher J."/>
            <person name="Sellers P."/>
            <person name="Gill J.E."/>
            <person name="Feldblyum T.V."/>
            <person name="Preuss D."/>
            <person name="Lin X."/>
            <person name="Nierman W.C."/>
            <person name="Salzberg S.L."/>
            <person name="White O."/>
            <person name="Venter J.C."/>
            <person name="Fraser C.M."/>
            <person name="Kaneko T."/>
            <person name="Nakamura Y."/>
            <person name="Sato S."/>
            <person name="Kato T."/>
            <person name="Asamizu E."/>
            <person name="Sasamoto S."/>
            <person name="Kimura T."/>
            <person name="Idesawa K."/>
            <person name="Kawashima K."/>
            <person name="Kishida Y."/>
            <person name="Kiyokawa C."/>
            <person name="Kohara M."/>
            <person name="Matsumoto M."/>
            <person name="Matsuno A."/>
            <person name="Muraki A."/>
            <person name="Nakayama S."/>
            <person name="Nakazaki N."/>
            <person name="Shinpo S."/>
            <person name="Takeuchi C."/>
            <person name="Wada T."/>
            <person name="Watanabe A."/>
            <person name="Yamada M."/>
            <person name="Yasuda M."/>
            <person name="Tabata S."/>
        </authorList>
    </citation>
    <scope>NUCLEOTIDE SEQUENCE [LARGE SCALE GENOMIC DNA]</scope>
    <source>
        <strain>cv. Columbia</strain>
    </source>
</reference>
<reference key="2">
    <citation type="journal article" date="2017" name="Plant J.">
        <title>Araport11: a complete reannotation of the Arabidopsis thaliana reference genome.</title>
        <authorList>
            <person name="Cheng C.Y."/>
            <person name="Krishnakumar V."/>
            <person name="Chan A.P."/>
            <person name="Thibaud-Nissen F."/>
            <person name="Schobel S."/>
            <person name="Town C.D."/>
        </authorList>
    </citation>
    <scope>GENOME REANNOTATION</scope>
    <source>
        <strain>cv. Columbia</strain>
    </source>
</reference>
<reference key="3">
    <citation type="journal article" date="2002" name="Science">
        <title>Functional annotation of a full-length Arabidopsis cDNA collection.</title>
        <authorList>
            <person name="Seki M."/>
            <person name="Narusaka M."/>
            <person name="Kamiya A."/>
            <person name="Ishida J."/>
            <person name="Satou M."/>
            <person name="Sakurai T."/>
            <person name="Nakajima M."/>
            <person name="Enju A."/>
            <person name="Akiyama K."/>
            <person name="Oono Y."/>
            <person name="Muramatsu M."/>
            <person name="Hayashizaki Y."/>
            <person name="Kawai J."/>
            <person name="Carninci P."/>
            <person name="Itoh M."/>
            <person name="Ishii Y."/>
            <person name="Arakawa T."/>
            <person name="Shibata K."/>
            <person name="Shinagawa A."/>
            <person name="Shinozaki K."/>
        </authorList>
    </citation>
    <scope>NUCLEOTIDE SEQUENCE [LARGE SCALE MRNA]</scope>
    <source>
        <strain>cv. Columbia</strain>
    </source>
</reference>
<reference key="4">
    <citation type="journal article" date="2003" name="Science">
        <title>Empirical analysis of transcriptional activity in the Arabidopsis genome.</title>
        <authorList>
            <person name="Yamada K."/>
            <person name="Lim J."/>
            <person name="Dale J.M."/>
            <person name="Chen H."/>
            <person name="Shinn P."/>
            <person name="Palm C.J."/>
            <person name="Southwick A.M."/>
            <person name="Wu H.C."/>
            <person name="Kim C.J."/>
            <person name="Nguyen M."/>
            <person name="Pham P.K."/>
            <person name="Cheuk R.F."/>
            <person name="Karlin-Newmann G."/>
            <person name="Liu S.X."/>
            <person name="Lam B."/>
            <person name="Sakano H."/>
            <person name="Wu T."/>
            <person name="Yu G."/>
            <person name="Miranda M."/>
            <person name="Quach H.L."/>
            <person name="Tripp M."/>
            <person name="Chang C.H."/>
            <person name="Lee J.M."/>
            <person name="Toriumi M.J."/>
            <person name="Chan M.M."/>
            <person name="Tang C.C."/>
            <person name="Onodera C.S."/>
            <person name="Deng J.M."/>
            <person name="Akiyama K."/>
            <person name="Ansari Y."/>
            <person name="Arakawa T."/>
            <person name="Banh J."/>
            <person name="Banno F."/>
            <person name="Bowser L."/>
            <person name="Brooks S.Y."/>
            <person name="Carninci P."/>
            <person name="Chao Q."/>
            <person name="Choy N."/>
            <person name="Enju A."/>
            <person name="Goldsmith A.D."/>
            <person name="Gurjal M."/>
            <person name="Hansen N.F."/>
            <person name="Hayashizaki Y."/>
            <person name="Johnson-Hopson C."/>
            <person name="Hsuan V.W."/>
            <person name="Iida K."/>
            <person name="Karnes M."/>
            <person name="Khan S."/>
            <person name="Koesema E."/>
            <person name="Ishida J."/>
            <person name="Jiang P.X."/>
            <person name="Jones T."/>
            <person name="Kawai J."/>
            <person name="Kamiya A."/>
            <person name="Meyers C."/>
            <person name="Nakajima M."/>
            <person name="Narusaka M."/>
            <person name="Seki M."/>
            <person name="Sakurai T."/>
            <person name="Satou M."/>
            <person name="Tamse R."/>
            <person name="Vaysberg M."/>
            <person name="Wallender E.K."/>
            <person name="Wong C."/>
            <person name="Yamamura Y."/>
            <person name="Yuan S."/>
            <person name="Shinozaki K."/>
            <person name="Davis R.W."/>
            <person name="Theologis A."/>
            <person name="Ecker J.R."/>
        </authorList>
    </citation>
    <scope>NUCLEOTIDE SEQUENCE [LARGE SCALE MRNA]</scope>
    <source>
        <strain>cv. Columbia</strain>
    </source>
</reference>
<reference key="5">
    <citation type="submission" date="2002-03" db="EMBL/GenBank/DDBJ databases">
        <title>Full-length cDNA from Arabidopsis thaliana.</title>
        <authorList>
            <person name="Brover V.V."/>
            <person name="Troukhan M.E."/>
            <person name="Alexandrov N.A."/>
            <person name="Lu Y.-P."/>
            <person name="Flavell R.B."/>
            <person name="Feldmann K.A."/>
        </authorList>
    </citation>
    <scope>NUCLEOTIDE SEQUENCE [LARGE SCALE MRNA]</scope>
</reference>
<reference key="6">
    <citation type="journal article" date="2007" name="Plant Physiol.">
        <title>Characterization of the preprotein and amino acid transporter gene family in Arabidopsis.</title>
        <authorList>
            <person name="Murcha M.W."/>
            <person name="Elhafez D."/>
            <person name="Lister R."/>
            <person name="Tonti-Filippini J."/>
            <person name="Baumgartner M."/>
            <person name="Philippar K."/>
            <person name="Carrie C."/>
            <person name="Mokranjac D."/>
            <person name="Soll J."/>
            <person name="Whelan J."/>
        </authorList>
    </citation>
    <scope>SUBCELLULAR LOCATION</scope>
</reference>
<dbReference type="EMBL" id="AC016661">
    <property type="protein sequence ID" value="AAF23300.1"/>
    <property type="molecule type" value="Genomic_DNA"/>
</dbReference>
<dbReference type="EMBL" id="CP002686">
    <property type="protein sequence ID" value="AEE74800.1"/>
    <property type="molecule type" value="Genomic_DNA"/>
</dbReference>
<dbReference type="EMBL" id="AK117795">
    <property type="protein sequence ID" value="BAC42440.1"/>
    <property type="molecule type" value="mRNA"/>
</dbReference>
<dbReference type="EMBL" id="BT004706">
    <property type="protein sequence ID" value="AAO42952.1"/>
    <property type="molecule type" value="mRNA"/>
</dbReference>
<dbReference type="EMBL" id="AY088289">
    <property type="protein sequence ID" value="AAM65828.1"/>
    <property type="molecule type" value="mRNA"/>
</dbReference>
<dbReference type="RefSeq" id="NP_566352.1">
    <property type="nucleotide sequence ID" value="NM_111804.4"/>
</dbReference>
<dbReference type="SMR" id="Q9SF33"/>
<dbReference type="BioGRID" id="5461">
    <property type="interactions" value="1"/>
</dbReference>
<dbReference type="FunCoup" id="Q9SF33">
    <property type="interactions" value="2998"/>
</dbReference>
<dbReference type="STRING" id="3702.Q9SF33"/>
<dbReference type="PaxDb" id="3702-AT3G09700.1"/>
<dbReference type="ProteomicsDB" id="234277"/>
<dbReference type="EnsemblPlants" id="AT3G09700.1">
    <property type="protein sequence ID" value="AT3G09700.1"/>
    <property type="gene ID" value="AT3G09700"/>
</dbReference>
<dbReference type="GeneID" id="820127"/>
<dbReference type="Gramene" id="AT3G09700.1">
    <property type="protein sequence ID" value="AT3G09700.1"/>
    <property type="gene ID" value="AT3G09700"/>
</dbReference>
<dbReference type="KEGG" id="ath:AT3G09700"/>
<dbReference type="Araport" id="AT3G09700"/>
<dbReference type="TAIR" id="AT3G09700"/>
<dbReference type="eggNOG" id="KOG0723">
    <property type="taxonomic scope" value="Eukaryota"/>
</dbReference>
<dbReference type="HOGENOM" id="CLU_017633_13_2_1"/>
<dbReference type="InParanoid" id="Q9SF33"/>
<dbReference type="OMA" id="MRYAEYT"/>
<dbReference type="OrthoDB" id="240298at2759"/>
<dbReference type="PhylomeDB" id="Q9SF33"/>
<dbReference type="PRO" id="PR:Q9SF33"/>
<dbReference type="Proteomes" id="UP000006548">
    <property type="component" value="Chromosome 3"/>
</dbReference>
<dbReference type="ExpressionAtlas" id="Q9SF33">
    <property type="expression patterns" value="baseline and differential"/>
</dbReference>
<dbReference type="GO" id="GO:0005743">
    <property type="term" value="C:mitochondrial inner membrane"/>
    <property type="evidence" value="ECO:0007669"/>
    <property type="project" value="UniProtKB-SubCell"/>
</dbReference>
<dbReference type="FunFam" id="1.10.287.110:FF:000001">
    <property type="entry name" value="Import inner membrane translocase subunit tim14"/>
    <property type="match status" value="1"/>
</dbReference>
<dbReference type="Gene3D" id="1.10.287.110">
    <property type="entry name" value="DnaJ domain"/>
    <property type="match status" value="1"/>
</dbReference>
<dbReference type="InterPro" id="IPR036869">
    <property type="entry name" value="J_dom_sf"/>
</dbReference>
<dbReference type="PANTHER" id="PTHR12763">
    <property type="match status" value="1"/>
</dbReference>
<dbReference type="PANTHER" id="PTHR12763:SF57">
    <property type="entry name" value="MITOCHONDRIAL IMPORT INNER MEMBRANE TRANSLOCASE SUBUNIT TIM14-2"/>
    <property type="match status" value="1"/>
</dbReference>
<dbReference type="SUPFAM" id="SSF46565">
    <property type="entry name" value="Chaperone J-domain"/>
    <property type="match status" value="1"/>
</dbReference>